<keyword id="KW-0963">Cytoplasm</keyword>
<keyword id="KW-0539">Nucleus</keyword>
<keyword id="KW-1185">Reference proteome</keyword>
<keyword id="KW-0346">Stress response</keyword>
<protein>
    <recommendedName>
        <fullName evidence="3">HUWE1-associated protein modifying stress responses</fullName>
    </recommendedName>
    <alternativeName>
        <fullName evidence="1">Telomere attrition and p53 response 1 protein</fullName>
    </alternativeName>
</protein>
<evidence type="ECO:0000250" key="1">
    <source>
        <dbReference type="UniProtKB" id="Q14CZ0"/>
    </source>
</evidence>
<evidence type="ECO:0000256" key="2">
    <source>
        <dbReference type="SAM" id="MobiDB-lite"/>
    </source>
</evidence>
<evidence type="ECO:0000305" key="3"/>
<proteinExistence type="evidence at transcript level"/>
<comment type="function">
    <text evidence="1">Acts as a central player within a network of stress response pathways promoting cellular adaptability. Functions as a negative regulator of TP53/P53 in the cellular response to telomere erosion and probably also DNA damage.</text>
</comment>
<comment type="subunit">
    <text evidence="1">Oligomer.</text>
</comment>
<comment type="subcellular location">
    <subcellularLocation>
        <location evidence="1">Nucleus</location>
    </subcellularLocation>
    <subcellularLocation>
        <location evidence="1">Cytoplasm</location>
    </subcellularLocation>
</comment>
<comment type="similarity">
    <text evidence="3">Belongs to the HAPSTR1 family.</text>
</comment>
<reference key="1">
    <citation type="submission" date="2006-10" db="EMBL/GenBank/DDBJ databases">
        <authorList>
            <consortium name="Sanger Xenopus tropicalis EST/cDNA project"/>
        </authorList>
    </citation>
    <scope>NUCLEOTIDE SEQUENCE [LARGE SCALE MRNA]</scope>
    <source>
        <tissue>Egg</tissue>
    </source>
</reference>
<organism>
    <name type="scientific">Xenopus tropicalis</name>
    <name type="common">Western clawed frog</name>
    <name type="synonym">Silurana tropicalis</name>
    <dbReference type="NCBI Taxonomy" id="8364"/>
    <lineage>
        <taxon>Eukaryota</taxon>
        <taxon>Metazoa</taxon>
        <taxon>Chordata</taxon>
        <taxon>Craniata</taxon>
        <taxon>Vertebrata</taxon>
        <taxon>Euteleostomi</taxon>
        <taxon>Amphibia</taxon>
        <taxon>Batrachia</taxon>
        <taxon>Anura</taxon>
        <taxon>Pipoidea</taxon>
        <taxon>Pipidae</taxon>
        <taxon>Xenopodinae</taxon>
        <taxon>Xenopus</taxon>
        <taxon>Silurana</taxon>
    </lineage>
</organism>
<feature type="chain" id="PRO_0000297631" description="HUWE1-associated protein modifying stress responses">
    <location>
        <begin position="1"/>
        <end position="265"/>
    </location>
</feature>
<feature type="region of interest" description="Disordered" evidence="2">
    <location>
        <begin position="1"/>
        <end position="22"/>
    </location>
</feature>
<feature type="region of interest" description="Disordered" evidence="2">
    <location>
        <begin position="145"/>
        <end position="170"/>
    </location>
</feature>
<feature type="region of interest" description="Disordered" evidence="2">
    <location>
        <begin position="195"/>
        <end position="218"/>
    </location>
</feature>
<feature type="region of interest" description="Disordered" evidence="2">
    <location>
        <begin position="240"/>
        <end position="265"/>
    </location>
</feature>
<feature type="compositionally biased region" description="Polar residues" evidence="2">
    <location>
        <begin position="156"/>
        <end position="170"/>
    </location>
</feature>
<feature type="compositionally biased region" description="Polar residues" evidence="2">
    <location>
        <begin position="195"/>
        <end position="212"/>
    </location>
</feature>
<dbReference type="EMBL" id="CR760682">
    <property type="protein sequence ID" value="CAJ82206.1"/>
    <property type="molecule type" value="mRNA"/>
</dbReference>
<dbReference type="RefSeq" id="NP_001016564.1">
    <property type="nucleotide sequence ID" value="NM_001016564.2"/>
</dbReference>
<dbReference type="RefSeq" id="XP_017952597.1">
    <property type="nucleotide sequence ID" value="XM_018097108.1"/>
</dbReference>
<dbReference type="FunCoup" id="Q28HY5">
    <property type="interactions" value="4751"/>
</dbReference>
<dbReference type="STRING" id="8364.ENSXETP00000008249"/>
<dbReference type="PaxDb" id="8364-ENSXETP00000019036"/>
<dbReference type="DNASU" id="549318"/>
<dbReference type="GeneID" id="549318"/>
<dbReference type="KEGG" id="xtr:549318"/>
<dbReference type="AGR" id="Xenbase:XB-GENE-957508"/>
<dbReference type="CTD" id="29035"/>
<dbReference type="Xenbase" id="XB-GENE-957508">
    <property type="gene designation" value="hapstr1"/>
</dbReference>
<dbReference type="eggNOG" id="ENOG502QPPE">
    <property type="taxonomic scope" value="Eukaryota"/>
</dbReference>
<dbReference type="HOGENOM" id="CLU_081329_0_0_1"/>
<dbReference type="InParanoid" id="Q28HY5"/>
<dbReference type="OMA" id="NSFEEEC"/>
<dbReference type="OrthoDB" id="5823474at2759"/>
<dbReference type="PhylomeDB" id="Q28HY5"/>
<dbReference type="TreeFam" id="TF323292"/>
<dbReference type="Proteomes" id="UP000008143">
    <property type="component" value="Chromosome 9"/>
</dbReference>
<dbReference type="Bgee" id="ENSXETG00000008699">
    <property type="expression patterns" value="Expressed in blastula and 15 other cell types or tissues"/>
</dbReference>
<dbReference type="GO" id="GO:0005737">
    <property type="term" value="C:cytoplasm"/>
    <property type="evidence" value="ECO:0000250"/>
    <property type="project" value="UniProtKB"/>
</dbReference>
<dbReference type="GO" id="GO:0005634">
    <property type="term" value="C:nucleus"/>
    <property type="evidence" value="ECO:0000250"/>
    <property type="project" value="UniProtKB"/>
</dbReference>
<dbReference type="GO" id="GO:1901797">
    <property type="term" value="P:negative regulation of signal transduction by p53 class mediator"/>
    <property type="evidence" value="ECO:0000250"/>
    <property type="project" value="UniProtKB"/>
</dbReference>
<dbReference type="GO" id="GO:0080135">
    <property type="term" value="P:regulation of cellular response to stress"/>
    <property type="evidence" value="ECO:0000250"/>
    <property type="project" value="UniProtKB"/>
</dbReference>
<dbReference type="InterPro" id="IPR040308">
    <property type="entry name" value="HAPR1"/>
</dbReference>
<dbReference type="InterPro" id="IPR029196">
    <property type="entry name" value="HAPSTR1-like"/>
</dbReference>
<dbReference type="PANTHER" id="PTHR31624:SF4">
    <property type="entry name" value="CHROMOSOME 16 OPEN READING FRAME 72"/>
    <property type="match status" value="1"/>
</dbReference>
<dbReference type="PANTHER" id="PTHR31624">
    <property type="entry name" value="UPF0472 PROTEIN C16ORF72"/>
    <property type="match status" value="1"/>
</dbReference>
<dbReference type="Pfam" id="PF15251">
    <property type="entry name" value="TAPR1-like"/>
    <property type="match status" value="1"/>
</dbReference>
<accession>Q28HY5</accession>
<sequence length="265" mass="29869">MEDKKEEGESEIQEHGPEHWFSKWERQCLAEAEQEDQPEEEAEQSQQKLWHLFQNSATAVAQLYKDRVCQQQGLSLWVPFQNAATAVTNLYKESVDAHQRSFDLGIQIGYQRRNKDVLAWVKKRRRTIRREDLISFLCGKVPPPRNSRAPPRLTVVSPNRATPTETGSSVETDLQPFREAIALHGLSGAMASISVRSSTPGSPTHVSGSSNTGRRRNGLHDVDLNTFISEEMALHLDNGGTRKRTSAQCGDVITDSPTHKRNRMI</sequence>
<name>HAPR1_XENTR</name>
<gene>
    <name evidence="3" type="primary">hapstr1</name>
    <name evidence="1" type="synonym">tapr1</name>
</gene>